<gene>
    <name type="primary">CML16</name>
    <name type="ordered locus">At3g25600</name>
    <name type="ORF">T5M7.6</name>
</gene>
<proteinExistence type="evidence at transcript level"/>
<feature type="chain" id="PRO_0000342946" description="Probable calcium-binding protein CML16">
    <location>
        <begin position="1"/>
        <end position="161"/>
    </location>
</feature>
<feature type="domain" description="EF-hand 1" evidence="2">
    <location>
        <begin position="8"/>
        <end position="43"/>
    </location>
</feature>
<feature type="domain" description="EF-hand 2" evidence="2">
    <location>
        <begin position="44"/>
        <end position="79"/>
    </location>
</feature>
<feature type="domain" description="EF-hand 3" evidence="2">
    <location>
        <begin position="83"/>
        <end position="118"/>
    </location>
</feature>
<feature type="domain" description="EF-hand 4" evidence="2">
    <location>
        <begin position="119"/>
        <end position="154"/>
    </location>
</feature>
<feature type="binding site" evidence="2">
    <location>
        <position position="21"/>
    </location>
    <ligand>
        <name>Ca(2+)</name>
        <dbReference type="ChEBI" id="CHEBI:29108"/>
        <label>1</label>
    </ligand>
</feature>
<feature type="binding site" evidence="2">
    <location>
        <position position="23"/>
    </location>
    <ligand>
        <name>Ca(2+)</name>
        <dbReference type="ChEBI" id="CHEBI:29108"/>
        <label>1</label>
    </ligand>
</feature>
<feature type="binding site" evidence="2">
    <location>
        <position position="25"/>
    </location>
    <ligand>
        <name>Ca(2+)</name>
        <dbReference type="ChEBI" id="CHEBI:29108"/>
        <label>1</label>
    </ligand>
</feature>
<feature type="binding site" evidence="2">
    <location>
        <position position="27"/>
    </location>
    <ligand>
        <name>Ca(2+)</name>
        <dbReference type="ChEBI" id="CHEBI:29108"/>
        <label>1</label>
    </ligand>
</feature>
<feature type="binding site" evidence="2">
    <location>
        <position position="32"/>
    </location>
    <ligand>
        <name>Ca(2+)</name>
        <dbReference type="ChEBI" id="CHEBI:29108"/>
        <label>1</label>
    </ligand>
</feature>
<feature type="binding site" evidence="2">
    <location>
        <position position="57"/>
    </location>
    <ligand>
        <name>Ca(2+)</name>
        <dbReference type="ChEBI" id="CHEBI:29108"/>
        <label>2</label>
    </ligand>
</feature>
<feature type="binding site" evidence="2">
    <location>
        <position position="59"/>
    </location>
    <ligand>
        <name>Ca(2+)</name>
        <dbReference type="ChEBI" id="CHEBI:29108"/>
        <label>2</label>
    </ligand>
</feature>
<feature type="binding site" evidence="2">
    <location>
        <position position="61"/>
    </location>
    <ligand>
        <name>Ca(2+)</name>
        <dbReference type="ChEBI" id="CHEBI:29108"/>
        <label>2</label>
    </ligand>
</feature>
<feature type="binding site" evidence="2">
    <location>
        <position position="63"/>
    </location>
    <ligand>
        <name>Ca(2+)</name>
        <dbReference type="ChEBI" id="CHEBI:29108"/>
        <label>2</label>
    </ligand>
</feature>
<feature type="binding site" evidence="2">
    <location>
        <position position="68"/>
    </location>
    <ligand>
        <name>Ca(2+)</name>
        <dbReference type="ChEBI" id="CHEBI:29108"/>
        <label>2</label>
    </ligand>
</feature>
<feature type="binding site" evidence="2">
    <location>
        <position position="96"/>
    </location>
    <ligand>
        <name>Ca(2+)</name>
        <dbReference type="ChEBI" id="CHEBI:29108"/>
        <label>3</label>
    </ligand>
</feature>
<feature type="binding site" evidence="2">
    <location>
        <position position="98"/>
    </location>
    <ligand>
        <name>Ca(2+)</name>
        <dbReference type="ChEBI" id="CHEBI:29108"/>
        <label>3</label>
    </ligand>
</feature>
<feature type="binding site" evidence="2">
    <location>
        <position position="100"/>
    </location>
    <ligand>
        <name>Ca(2+)</name>
        <dbReference type="ChEBI" id="CHEBI:29108"/>
        <label>3</label>
    </ligand>
</feature>
<feature type="binding site" evidence="2">
    <location>
        <position position="102"/>
    </location>
    <ligand>
        <name>Ca(2+)</name>
        <dbReference type="ChEBI" id="CHEBI:29108"/>
        <label>3</label>
    </ligand>
</feature>
<feature type="binding site" evidence="2">
    <location>
        <position position="107"/>
    </location>
    <ligand>
        <name>Ca(2+)</name>
        <dbReference type="ChEBI" id="CHEBI:29108"/>
        <label>3</label>
    </ligand>
</feature>
<feature type="binding site" evidence="2">
    <location>
        <position position="132"/>
    </location>
    <ligand>
        <name>Ca(2+)</name>
        <dbReference type="ChEBI" id="CHEBI:29108"/>
        <label>4</label>
    </ligand>
</feature>
<feature type="binding site" evidence="2">
    <location>
        <position position="134"/>
    </location>
    <ligand>
        <name>Ca(2+)</name>
        <dbReference type="ChEBI" id="CHEBI:29108"/>
        <label>4</label>
    </ligand>
</feature>
<feature type="binding site" evidence="2">
    <location>
        <position position="136"/>
    </location>
    <ligand>
        <name>Ca(2+)</name>
        <dbReference type="ChEBI" id="CHEBI:29108"/>
        <label>4</label>
    </ligand>
</feature>
<feature type="binding site" evidence="2">
    <location>
        <position position="143"/>
    </location>
    <ligand>
        <name>Ca(2+)</name>
        <dbReference type="ChEBI" id="CHEBI:29108"/>
        <label>4</label>
    </ligand>
</feature>
<feature type="sequence conflict" description="In Ref. 1; BAB03079." evidence="4" ref="1">
    <original>G</original>
    <variation>S</variation>
    <location>
        <position position="46"/>
    </location>
</feature>
<comment type="function">
    <text evidence="1">Potential calcium sensor.</text>
</comment>
<comment type="induction">
    <text evidence="3">By touch and during darkness conditions.</text>
</comment>
<comment type="caution">
    <text evidence="4">Although assigned as a calmodulin family member by Ref.5, it only contains EF-hand domains.</text>
</comment>
<keyword id="KW-0106">Calcium</keyword>
<keyword id="KW-0479">Metal-binding</keyword>
<keyword id="KW-1185">Reference proteome</keyword>
<keyword id="KW-0677">Repeat</keyword>
<dbReference type="EMBL" id="AP001313">
    <property type="protein sequence ID" value="BAB03079.1"/>
    <property type="molecule type" value="Genomic_DNA"/>
</dbReference>
<dbReference type="EMBL" id="CP002686">
    <property type="protein sequence ID" value="AEE77041.1"/>
    <property type="molecule type" value="Genomic_DNA"/>
</dbReference>
<dbReference type="EMBL" id="BT003928">
    <property type="protein sequence ID" value="AAO41975.1"/>
    <property type="molecule type" value="mRNA"/>
</dbReference>
<dbReference type="EMBL" id="BT014869">
    <property type="protein sequence ID" value="AAT41852.1"/>
    <property type="molecule type" value="mRNA"/>
</dbReference>
<dbReference type="RefSeq" id="NP_189188.4">
    <property type="nucleotide sequence ID" value="NM_113458.8"/>
</dbReference>
<dbReference type="SMR" id="Q9LI84"/>
<dbReference type="FunCoup" id="Q9LI84">
    <property type="interactions" value="218"/>
</dbReference>
<dbReference type="STRING" id="3702.Q9LI84"/>
<dbReference type="PaxDb" id="3702-AT3G25600.1"/>
<dbReference type="ProteomicsDB" id="240991"/>
<dbReference type="EnsemblPlants" id="AT3G25600.1">
    <property type="protein sequence ID" value="AT3G25600.1"/>
    <property type="gene ID" value="AT3G25600"/>
</dbReference>
<dbReference type="GeneID" id="822147"/>
<dbReference type="Gramene" id="AT3G25600.1">
    <property type="protein sequence ID" value="AT3G25600.1"/>
    <property type="gene ID" value="AT3G25600"/>
</dbReference>
<dbReference type="KEGG" id="ath:AT3G25600"/>
<dbReference type="Araport" id="AT3G25600"/>
<dbReference type="TAIR" id="AT3G25600">
    <property type="gene designation" value="CML16"/>
</dbReference>
<dbReference type="eggNOG" id="KOG0027">
    <property type="taxonomic scope" value="Eukaryota"/>
</dbReference>
<dbReference type="HOGENOM" id="CLU_061288_2_2_1"/>
<dbReference type="InParanoid" id="Q9LI84"/>
<dbReference type="OMA" id="HAIMPDL"/>
<dbReference type="OrthoDB" id="26525at2759"/>
<dbReference type="PRO" id="PR:Q9LI84"/>
<dbReference type="Proteomes" id="UP000006548">
    <property type="component" value="Chromosome 3"/>
</dbReference>
<dbReference type="ExpressionAtlas" id="Q9LI84">
    <property type="expression patterns" value="baseline and differential"/>
</dbReference>
<dbReference type="GO" id="GO:0005509">
    <property type="term" value="F:calcium ion binding"/>
    <property type="evidence" value="ECO:0000314"/>
    <property type="project" value="TAIR"/>
</dbReference>
<dbReference type="FunFam" id="1.10.238.10:FF:000313">
    <property type="entry name" value="Probable calcium-binding protein CML16"/>
    <property type="match status" value="1"/>
</dbReference>
<dbReference type="Gene3D" id="1.10.238.10">
    <property type="entry name" value="EF-hand"/>
    <property type="match status" value="1"/>
</dbReference>
<dbReference type="InterPro" id="IPR050230">
    <property type="entry name" value="CALM/Myosin/TropC-like"/>
</dbReference>
<dbReference type="InterPro" id="IPR011992">
    <property type="entry name" value="EF-hand-dom_pair"/>
</dbReference>
<dbReference type="InterPro" id="IPR018247">
    <property type="entry name" value="EF_Hand_1_Ca_BS"/>
</dbReference>
<dbReference type="InterPro" id="IPR002048">
    <property type="entry name" value="EF_hand_dom"/>
</dbReference>
<dbReference type="PANTHER" id="PTHR23048:SF52">
    <property type="entry name" value="CALCIUM-BINDING PROTEIN CML18-RELATED"/>
    <property type="match status" value="1"/>
</dbReference>
<dbReference type="PANTHER" id="PTHR23048">
    <property type="entry name" value="MYOSIN LIGHT CHAIN 1, 3"/>
    <property type="match status" value="1"/>
</dbReference>
<dbReference type="Pfam" id="PF13499">
    <property type="entry name" value="EF-hand_7"/>
    <property type="match status" value="2"/>
</dbReference>
<dbReference type="SMART" id="SM00054">
    <property type="entry name" value="EFh"/>
    <property type="match status" value="4"/>
</dbReference>
<dbReference type="SUPFAM" id="SSF47473">
    <property type="entry name" value="EF-hand"/>
    <property type="match status" value="1"/>
</dbReference>
<dbReference type="PROSITE" id="PS00018">
    <property type="entry name" value="EF_HAND_1"/>
    <property type="match status" value="4"/>
</dbReference>
<dbReference type="PROSITE" id="PS50222">
    <property type="entry name" value="EF_HAND_2"/>
    <property type="match status" value="4"/>
</dbReference>
<name>CML16_ARATH</name>
<evidence type="ECO:0000250" key="1"/>
<evidence type="ECO:0000255" key="2">
    <source>
        <dbReference type="PROSITE-ProRule" id="PRU00448"/>
    </source>
</evidence>
<evidence type="ECO:0000269" key="3">
    <source>
    </source>
</evidence>
<evidence type="ECO:0000305" key="4"/>
<accession>Q9LI84</accession>
<accession>Q84WD7</accession>
<organism>
    <name type="scientific">Arabidopsis thaliana</name>
    <name type="common">Mouse-ear cress</name>
    <dbReference type="NCBI Taxonomy" id="3702"/>
    <lineage>
        <taxon>Eukaryota</taxon>
        <taxon>Viridiplantae</taxon>
        <taxon>Streptophyta</taxon>
        <taxon>Embryophyta</taxon>
        <taxon>Tracheophyta</taxon>
        <taxon>Spermatophyta</taxon>
        <taxon>Magnoliopsida</taxon>
        <taxon>eudicotyledons</taxon>
        <taxon>Gunneridae</taxon>
        <taxon>Pentapetalae</taxon>
        <taxon>rosids</taxon>
        <taxon>malvids</taxon>
        <taxon>Brassicales</taxon>
        <taxon>Brassicaceae</taxon>
        <taxon>Camelineae</taxon>
        <taxon>Arabidopsis</taxon>
    </lineage>
</organism>
<reference key="1">
    <citation type="journal article" date="2000" name="DNA Res.">
        <title>Structural analysis of Arabidopsis thaliana chromosome 3. II. Sequence features of the 4,251,695 bp regions covered by 90 P1, TAC and BAC clones.</title>
        <authorList>
            <person name="Kaneko T."/>
            <person name="Katoh T."/>
            <person name="Sato S."/>
            <person name="Nakamura Y."/>
            <person name="Asamizu E."/>
            <person name="Tabata S."/>
        </authorList>
    </citation>
    <scope>NUCLEOTIDE SEQUENCE [LARGE SCALE GENOMIC DNA]</scope>
    <source>
        <strain>cv. Columbia</strain>
    </source>
</reference>
<reference key="2">
    <citation type="journal article" date="2017" name="Plant J.">
        <title>Araport11: a complete reannotation of the Arabidopsis thaliana reference genome.</title>
        <authorList>
            <person name="Cheng C.Y."/>
            <person name="Krishnakumar V."/>
            <person name="Chan A.P."/>
            <person name="Thibaud-Nissen F."/>
            <person name="Schobel S."/>
            <person name="Town C.D."/>
        </authorList>
    </citation>
    <scope>GENOME REANNOTATION</scope>
    <source>
        <strain>cv. Columbia</strain>
    </source>
</reference>
<reference key="3">
    <citation type="journal article" date="2003" name="Science">
        <title>Empirical analysis of transcriptional activity in the Arabidopsis genome.</title>
        <authorList>
            <person name="Yamada K."/>
            <person name="Lim J."/>
            <person name="Dale J.M."/>
            <person name="Chen H."/>
            <person name="Shinn P."/>
            <person name="Palm C.J."/>
            <person name="Southwick A.M."/>
            <person name="Wu H.C."/>
            <person name="Kim C.J."/>
            <person name="Nguyen M."/>
            <person name="Pham P.K."/>
            <person name="Cheuk R.F."/>
            <person name="Karlin-Newmann G."/>
            <person name="Liu S.X."/>
            <person name="Lam B."/>
            <person name="Sakano H."/>
            <person name="Wu T."/>
            <person name="Yu G."/>
            <person name="Miranda M."/>
            <person name="Quach H.L."/>
            <person name="Tripp M."/>
            <person name="Chang C.H."/>
            <person name="Lee J.M."/>
            <person name="Toriumi M.J."/>
            <person name="Chan M.M."/>
            <person name="Tang C.C."/>
            <person name="Onodera C.S."/>
            <person name="Deng J.M."/>
            <person name="Akiyama K."/>
            <person name="Ansari Y."/>
            <person name="Arakawa T."/>
            <person name="Banh J."/>
            <person name="Banno F."/>
            <person name="Bowser L."/>
            <person name="Brooks S.Y."/>
            <person name="Carninci P."/>
            <person name="Chao Q."/>
            <person name="Choy N."/>
            <person name="Enju A."/>
            <person name="Goldsmith A.D."/>
            <person name="Gurjal M."/>
            <person name="Hansen N.F."/>
            <person name="Hayashizaki Y."/>
            <person name="Johnson-Hopson C."/>
            <person name="Hsuan V.W."/>
            <person name="Iida K."/>
            <person name="Karnes M."/>
            <person name="Khan S."/>
            <person name="Koesema E."/>
            <person name="Ishida J."/>
            <person name="Jiang P.X."/>
            <person name="Jones T."/>
            <person name="Kawai J."/>
            <person name="Kamiya A."/>
            <person name="Meyers C."/>
            <person name="Nakajima M."/>
            <person name="Narusaka M."/>
            <person name="Seki M."/>
            <person name="Sakurai T."/>
            <person name="Satou M."/>
            <person name="Tamse R."/>
            <person name="Vaysberg M."/>
            <person name="Wallender E.K."/>
            <person name="Wong C."/>
            <person name="Yamamura Y."/>
            <person name="Yuan S."/>
            <person name="Shinozaki K."/>
            <person name="Davis R.W."/>
            <person name="Theologis A."/>
            <person name="Ecker J.R."/>
        </authorList>
    </citation>
    <scope>NUCLEOTIDE SEQUENCE [LARGE SCALE MRNA]</scope>
    <source>
        <strain>cv. Columbia</strain>
    </source>
</reference>
<reference key="4">
    <citation type="submission" date="2004-06" db="EMBL/GenBank/DDBJ databases">
        <title>Arabidopsis ORF clones.</title>
        <authorList>
            <person name="Cheuk R.F."/>
            <person name="Chen H."/>
            <person name="Kim C.J."/>
            <person name="Shinn P."/>
            <person name="Ecker J.R."/>
        </authorList>
    </citation>
    <scope>NUCLEOTIDE SEQUENCE [LARGE SCALE MRNA]</scope>
    <source>
        <strain>cv. Columbia</strain>
    </source>
</reference>
<reference key="5">
    <citation type="journal article" date="2003" name="New Phytol.">
        <title>Calmodulins and related potential calcium sensors of Arabidopsis.</title>
        <authorList>
            <person name="McCormack E."/>
            <person name="Braam J."/>
        </authorList>
    </citation>
    <scope>GENE FAMILY</scope>
    <scope>NOMENCLATURE</scope>
</reference>
<reference key="6">
    <citation type="journal article" date="2005" name="New Phytol.">
        <title>Genome-wide identification of touch- and darkness-regulated Arabidopsis genes: a focus on calmodulin-like and XTH genes.</title>
        <authorList>
            <person name="Lee D."/>
            <person name="Polisensky D.H."/>
            <person name="Braam J."/>
        </authorList>
    </citation>
    <scope>INDUCTION</scope>
</reference>
<protein>
    <recommendedName>
        <fullName>Probable calcium-binding protein CML16</fullName>
    </recommendedName>
    <alternativeName>
        <fullName>Calmodulin-like protein 16</fullName>
    </alternativeName>
</protein>
<sequence>MASTKPTDQIKQLKDIFARFDMDKDGSLTQLELAALLRSLGIKPRGDQISLLLNQIDRNGNGSVEFDELVVAILPDINEEVLINQEQLMEVFRSFDRDGNGSITAAELAGSMAKMGHPLTYRELTEMMTEADSNGDGVISFNEFSHIMAKSAADFLGLTAS</sequence>